<comment type="catalytic activity">
    <reaction evidence="1">
        <text>tRNA(Gly) + glycine + ATP = glycyl-tRNA(Gly) + AMP + diphosphate</text>
        <dbReference type="Rhea" id="RHEA:16013"/>
        <dbReference type="Rhea" id="RHEA-COMP:9664"/>
        <dbReference type="Rhea" id="RHEA-COMP:9683"/>
        <dbReference type="ChEBI" id="CHEBI:30616"/>
        <dbReference type="ChEBI" id="CHEBI:33019"/>
        <dbReference type="ChEBI" id="CHEBI:57305"/>
        <dbReference type="ChEBI" id="CHEBI:78442"/>
        <dbReference type="ChEBI" id="CHEBI:78522"/>
        <dbReference type="ChEBI" id="CHEBI:456215"/>
        <dbReference type="EC" id="6.1.1.14"/>
    </reaction>
</comment>
<comment type="subunit">
    <text evidence="1">Tetramer of two alpha and two beta subunits.</text>
</comment>
<comment type="subcellular location">
    <subcellularLocation>
        <location evidence="1">Cytoplasm</location>
    </subcellularLocation>
</comment>
<comment type="similarity">
    <text evidence="1">Belongs to the class-II aminoacyl-tRNA synthetase family.</text>
</comment>
<name>SYGA_DICT6</name>
<feature type="chain" id="PRO_1000101185" description="Glycine--tRNA ligase alpha subunit">
    <location>
        <begin position="1"/>
        <end position="299"/>
    </location>
</feature>
<protein>
    <recommendedName>
        <fullName evidence="1">Glycine--tRNA ligase alpha subunit</fullName>
        <ecNumber evidence="1">6.1.1.14</ecNumber>
    </recommendedName>
    <alternativeName>
        <fullName evidence="1">Glycyl-tRNA synthetase alpha subunit</fullName>
        <shortName evidence="1">GlyRS</shortName>
    </alternativeName>
</protein>
<accession>B5YES5</accession>
<keyword id="KW-0030">Aminoacyl-tRNA synthetase</keyword>
<keyword id="KW-0067">ATP-binding</keyword>
<keyword id="KW-0963">Cytoplasm</keyword>
<keyword id="KW-0436">Ligase</keyword>
<keyword id="KW-0547">Nucleotide-binding</keyword>
<keyword id="KW-0648">Protein biosynthesis</keyword>
<proteinExistence type="inferred from homology"/>
<sequence length="299" mass="34964">MLFQEIIFKLNEFWHKQGCIIQQPYDIEVGAGTMNPATFFRVLGPEPWYVAYVEPSRRPTDGRYGENPNRLQHYYQYQVILKPSPANVQEIYIESLEYLGIDIEKHDIRFVEDNWESPTLGAWGIGWEVWLDGMEITQFTYFQQCGGFDLFPISAEITYGLERIAMYIQGIDDFKDIKWQDGITYGDIHLQSEVENCIYNFELADVERLRLLFNEYEKEAERLLNEGLTFPGYDYVLKCSHTFNLLDARGAISVVQRSQYISRIRRLAAKAAENYLKSREALGFPLLNKAWRKEEAQIG</sequence>
<gene>
    <name evidence="1" type="primary">glyQ</name>
    <name type="ordered locus">DICTH_1204</name>
</gene>
<dbReference type="EC" id="6.1.1.14" evidence="1"/>
<dbReference type="EMBL" id="CP001146">
    <property type="protein sequence ID" value="ACI18824.1"/>
    <property type="molecule type" value="Genomic_DNA"/>
</dbReference>
<dbReference type="RefSeq" id="WP_012547456.1">
    <property type="nucleotide sequence ID" value="NC_011297.1"/>
</dbReference>
<dbReference type="SMR" id="B5YES5"/>
<dbReference type="STRING" id="309799.DICTH_1204"/>
<dbReference type="PaxDb" id="309799-DICTH_1204"/>
<dbReference type="KEGG" id="dth:DICTH_1204"/>
<dbReference type="eggNOG" id="COG0752">
    <property type="taxonomic scope" value="Bacteria"/>
</dbReference>
<dbReference type="HOGENOM" id="CLU_057066_1_0_0"/>
<dbReference type="OrthoDB" id="9802183at2"/>
<dbReference type="Proteomes" id="UP000001733">
    <property type="component" value="Chromosome"/>
</dbReference>
<dbReference type="GO" id="GO:0005829">
    <property type="term" value="C:cytosol"/>
    <property type="evidence" value="ECO:0007669"/>
    <property type="project" value="TreeGrafter"/>
</dbReference>
<dbReference type="GO" id="GO:0005524">
    <property type="term" value="F:ATP binding"/>
    <property type="evidence" value="ECO:0007669"/>
    <property type="project" value="UniProtKB-UniRule"/>
</dbReference>
<dbReference type="GO" id="GO:0004820">
    <property type="term" value="F:glycine-tRNA ligase activity"/>
    <property type="evidence" value="ECO:0007669"/>
    <property type="project" value="UniProtKB-UniRule"/>
</dbReference>
<dbReference type="GO" id="GO:0006426">
    <property type="term" value="P:glycyl-tRNA aminoacylation"/>
    <property type="evidence" value="ECO:0007669"/>
    <property type="project" value="UniProtKB-UniRule"/>
</dbReference>
<dbReference type="CDD" id="cd00733">
    <property type="entry name" value="GlyRS_alpha_core"/>
    <property type="match status" value="1"/>
</dbReference>
<dbReference type="FunFam" id="3.30.930.10:FF:000006">
    <property type="entry name" value="Glycine--tRNA ligase alpha subunit"/>
    <property type="match status" value="1"/>
</dbReference>
<dbReference type="Gene3D" id="3.30.930.10">
    <property type="entry name" value="Bira Bifunctional Protein, Domain 2"/>
    <property type="match status" value="1"/>
</dbReference>
<dbReference type="Gene3D" id="1.20.58.180">
    <property type="entry name" value="Class II aaRS and biotin synthetases, domain 2"/>
    <property type="match status" value="1"/>
</dbReference>
<dbReference type="HAMAP" id="MF_00254">
    <property type="entry name" value="Gly_tRNA_synth_alpha"/>
    <property type="match status" value="1"/>
</dbReference>
<dbReference type="InterPro" id="IPR045864">
    <property type="entry name" value="aa-tRNA-synth_II/BPL/LPL"/>
</dbReference>
<dbReference type="InterPro" id="IPR006194">
    <property type="entry name" value="Gly-tRNA-synth_heterodimer"/>
</dbReference>
<dbReference type="InterPro" id="IPR002310">
    <property type="entry name" value="Gly-tRNA_ligase_asu"/>
</dbReference>
<dbReference type="NCBIfam" id="TIGR00388">
    <property type="entry name" value="glyQ"/>
    <property type="match status" value="1"/>
</dbReference>
<dbReference type="NCBIfam" id="NF006827">
    <property type="entry name" value="PRK09348.1"/>
    <property type="match status" value="1"/>
</dbReference>
<dbReference type="PANTHER" id="PTHR30075:SF2">
    <property type="entry name" value="GLYCINE--TRNA LIGASE, CHLOROPLASTIC_MITOCHONDRIAL 2"/>
    <property type="match status" value="1"/>
</dbReference>
<dbReference type="PANTHER" id="PTHR30075">
    <property type="entry name" value="GLYCYL-TRNA SYNTHETASE"/>
    <property type="match status" value="1"/>
</dbReference>
<dbReference type="Pfam" id="PF02091">
    <property type="entry name" value="tRNA-synt_2e"/>
    <property type="match status" value="1"/>
</dbReference>
<dbReference type="PRINTS" id="PR01044">
    <property type="entry name" value="TRNASYNTHGA"/>
</dbReference>
<dbReference type="SUPFAM" id="SSF55681">
    <property type="entry name" value="Class II aaRS and biotin synthetases"/>
    <property type="match status" value="1"/>
</dbReference>
<dbReference type="PROSITE" id="PS50861">
    <property type="entry name" value="AA_TRNA_LIGASE_II_GLYAB"/>
    <property type="match status" value="1"/>
</dbReference>
<evidence type="ECO:0000255" key="1">
    <source>
        <dbReference type="HAMAP-Rule" id="MF_00254"/>
    </source>
</evidence>
<reference key="1">
    <citation type="journal article" date="2014" name="Genome Announc.">
        <title>Complete Genome Sequence of the Extreme Thermophile Dictyoglomus thermophilum H-6-12.</title>
        <authorList>
            <person name="Coil D.A."/>
            <person name="Badger J.H."/>
            <person name="Forberger H.C."/>
            <person name="Riggs F."/>
            <person name="Madupu R."/>
            <person name="Fedorova N."/>
            <person name="Ward N."/>
            <person name="Robb F.T."/>
            <person name="Eisen J.A."/>
        </authorList>
    </citation>
    <scope>NUCLEOTIDE SEQUENCE [LARGE SCALE GENOMIC DNA]</scope>
    <source>
        <strain>ATCC 35947 / DSM 3960 / H-6-12</strain>
    </source>
</reference>
<organism>
    <name type="scientific">Dictyoglomus thermophilum (strain ATCC 35947 / DSM 3960 / H-6-12)</name>
    <dbReference type="NCBI Taxonomy" id="309799"/>
    <lineage>
        <taxon>Bacteria</taxon>
        <taxon>Pseudomonadati</taxon>
        <taxon>Dictyoglomota</taxon>
        <taxon>Dictyoglomia</taxon>
        <taxon>Dictyoglomales</taxon>
        <taxon>Dictyoglomaceae</taxon>
        <taxon>Dictyoglomus</taxon>
    </lineage>
</organism>